<organism>
    <name type="scientific">Schizosaccharomyces pombe (strain 972 / ATCC 24843)</name>
    <name type="common">Fission yeast</name>
    <dbReference type="NCBI Taxonomy" id="284812"/>
    <lineage>
        <taxon>Eukaryota</taxon>
        <taxon>Fungi</taxon>
        <taxon>Dikarya</taxon>
        <taxon>Ascomycota</taxon>
        <taxon>Taphrinomycotina</taxon>
        <taxon>Schizosaccharomycetes</taxon>
        <taxon>Schizosaccharomycetales</taxon>
        <taxon>Schizosaccharomycetaceae</taxon>
        <taxon>Schizosaccharomyces</taxon>
    </lineage>
</organism>
<keyword id="KW-0539">Nucleus</keyword>
<keyword id="KW-1185">Reference proteome</keyword>
<keyword id="KW-0677">Repeat</keyword>
<keyword id="KW-0690">Ribosome biogenesis</keyword>
<keyword id="KW-0698">rRNA processing</keyword>
<protein>
    <recommendedName>
        <fullName>Nucleolar protein 9</fullName>
    </recommendedName>
    <alternativeName>
        <fullName>Pumilio domain-containing protein nop9</fullName>
    </alternativeName>
</protein>
<feature type="chain" id="PRO_0000075937" description="Nucleolar protein 9">
    <location>
        <begin position="1"/>
        <end position="655"/>
    </location>
</feature>
<feature type="repeat" description="Pumilio 1">
    <location>
        <begin position="96"/>
        <end position="131"/>
    </location>
</feature>
<feature type="repeat" description="Pumilio 2">
    <location>
        <begin position="132"/>
        <end position="170"/>
    </location>
</feature>
<feature type="repeat" description="Pumilio 3">
    <location>
        <begin position="260"/>
        <end position="303"/>
    </location>
</feature>
<feature type="repeat" description="Pumilio 4">
    <location>
        <begin position="314"/>
        <end position="348"/>
    </location>
</feature>
<feature type="repeat" description="Pumilio 5">
    <location>
        <begin position="349"/>
        <end position="385"/>
    </location>
</feature>
<feature type="repeat" description="Pumilio 6">
    <location>
        <begin position="490"/>
        <end position="528"/>
    </location>
</feature>
<feature type="repeat" description="Pumilio 7">
    <location>
        <begin position="529"/>
        <end position="566"/>
    </location>
</feature>
<feature type="region of interest" description="Disordered" evidence="2">
    <location>
        <begin position="1"/>
        <end position="41"/>
    </location>
</feature>
<feature type="region of interest" description="Disordered" evidence="2">
    <location>
        <begin position="612"/>
        <end position="655"/>
    </location>
</feature>
<feature type="compositionally biased region" description="Basic residues" evidence="2">
    <location>
        <begin position="1"/>
        <end position="14"/>
    </location>
</feature>
<sequence>MPKKRKTRGKKHSAKQKEEEVNSVVSPGIAKNDEGAGNDEGAYQVNRYTNEPVQPFFGALDPEEEKYFQQAEQAFANHFTRENEDTRFFVDSIYREVQGKELIVCNNVFGSKVLEKLFPLSTSRQIKSFFSALNGHYVELIQTTFGSYAFEKLLSHMAAILNLETQGVTEDQDDVLEGENENVFMTAETLLMYMYNEIRPEVSMLMSHKLAVHVLGKIFLLLDGYRFVYHDGNRTTMESISVPESFPQFAYSIIDSATDNLDTPELRAYCVDKYASQIMRAFIRIDFERSKKTKKKHDPRLVSKLLLSNEYDLKELPFMETLLKDETGSRILEVIVENMSASHLLRFYAVFEGRFYRLCVHPIANFIMQRYIRRLGRKEIGSVIDELKKNTDNIIRKSFLPVLRTLLEKSNHLHCYQDDIFSMIQTSVTNSGKDANIIPCLLRSKHKRDKANPENKERKLVNNLLGAQLLEEMLHCEKQHIQLLLDSVLDLSKEQILEYCLETVSSHLIEGILDLSDLNPVFLKKFLNILSGSFATLAVSAPGSHIVDKAWKATRALPLYRTRIVRELAEGGDDVKFDFYGKKVCSNWKVELFRRAPDEWYRFMKQDEPSKRVHERARQYGRIVSGSSANTQPLGEKRSTENDEELESGPKRVKV</sequence>
<accession>Q92347</accession>
<name>NOP9_SCHPO</name>
<reference key="1">
    <citation type="journal article" date="2002" name="Nature">
        <title>The genome sequence of Schizosaccharomyces pombe.</title>
        <authorList>
            <person name="Wood V."/>
            <person name="Gwilliam R."/>
            <person name="Rajandream M.A."/>
            <person name="Lyne M.H."/>
            <person name="Lyne R."/>
            <person name="Stewart A."/>
            <person name="Sgouros J.G."/>
            <person name="Peat N."/>
            <person name="Hayles J."/>
            <person name="Baker S.G."/>
            <person name="Basham D."/>
            <person name="Bowman S."/>
            <person name="Brooks K."/>
            <person name="Brown D."/>
            <person name="Brown S."/>
            <person name="Chillingworth T."/>
            <person name="Churcher C.M."/>
            <person name="Collins M."/>
            <person name="Connor R."/>
            <person name="Cronin A."/>
            <person name="Davis P."/>
            <person name="Feltwell T."/>
            <person name="Fraser A."/>
            <person name="Gentles S."/>
            <person name="Goble A."/>
            <person name="Hamlin N."/>
            <person name="Harris D.E."/>
            <person name="Hidalgo J."/>
            <person name="Hodgson G."/>
            <person name="Holroyd S."/>
            <person name="Hornsby T."/>
            <person name="Howarth S."/>
            <person name="Huckle E.J."/>
            <person name="Hunt S."/>
            <person name="Jagels K."/>
            <person name="James K.D."/>
            <person name="Jones L."/>
            <person name="Jones M."/>
            <person name="Leather S."/>
            <person name="McDonald S."/>
            <person name="McLean J."/>
            <person name="Mooney P."/>
            <person name="Moule S."/>
            <person name="Mungall K.L."/>
            <person name="Murphy L.D."/>
            <person name="Niblett D."/>
            <person name="Odell C."/>
            <person name="Oliver K."/>
            <person name="O'Neil S."/>
            <person name="Pearson D."/>
            <person name="Quail M.A."/>
            <person name="Rabbinowitsch E."/>
            <person name="Rutherford K.M."/>
            <person name="Rutter S."/>
            <person name="Saunders D."/>
            <person name="Seeger K."/>
            <person name="Sharp S."/>
            <person name="Skelton J."/>
            <person name="Simmonds M.N."/>
            <person name="Squares R."/>
            <person name="Squares S."/>
            <person name="Stevens K."/>
            <person name="Taylor K."/>
            <person name="Taylor R.G."/>
            <person name="Tivey A."/>
            <person name="Walsh S.V."/>
            <person name="Warren T."/>
            <person name="Whitehead S."/>
            <person name="Woodward J.R."/>
            <person name="Volckaert G."/>
            <person name="Aert R."/>
            <person name="Robben J."/>
            <person name="Grymonprez B."/>
            <person name="Weltjens I."/>
            <person name="Vanstreels E."/>
            <person name="Rieger M."/>
            <person name="Schaefer M."/>
            <person name="Mueller-Auer S."/>
            <person name="Gabel C."/>
            <person name="Fuchs M."/>
            <person name="Duesterhoeft A."/>
            <person name="Fritzc C."/>
            <person name="Holzer E."/>
            <person name="Moestl D."/>
            <person name="Hilbert H."/>
            <person name="Borzym K."/>
            <person name="Langer I."/>
            <person name="Beck A."/>
            <person name="Lehrach H."/>
            <person name="Reinhardt R."/>
            <person name="Pohl T.M."/>
            <person name="Eger P."/>
            <person name="Zimmermann W."/>
            <person name="Wedler H."/>
            <person name="Wambutt R."/>
            <person name="Purnelle B."/>
            <person name="Goffeau A."/>
            <person name="Cadieu E."/>
            <person name="Dreano S."/>
            <person name="Gloux S."/>
            <person name="Lelaure V."/>
            <person name="Mottier S."/>
            <person name="Galibert F."/>
            <person name="Aves S.J."/>
            <person name="Xiang Z."/>
            <person name="Hunt C."/>
            <person name="Moore K."/>
            <person name="Hurst S.M."/>
            <person name="Lucas M."/>
            <person name="Rochet M."/>
            <person name="Gaillardin C."/>
            <person name="Tallada V.A."/>
            <person name="Garzon A."/>
            <person name="Thode G."/>
            <person name="Daga R.R."/>
            <person name="Cruzado L."/>
            <person name="Jimenez J."/>
            <person name="Sanchez M."/>
            <person name="del Rey F."/>
            <person name="Benito J."/>
            <person name="Dominguez A."/>
            <person name="Revuelta J.L."/>
            <person name="Moreno S."/>
            <person name="Armstrong J."/>
            <person name="Forsburg S.L."/>
            <person name="Cerutti L."/>
            <person name="Lowe T."/>
            <person name="McCombie W.R."/>
            <person name="Paulsen I."/>
            <person name="Potashkin J."/>
            <person name="Shpakovski G.V."/>
            <person name="Ussery D."/>
            <person name="Barrell B.G."/>
            <person name="Nurse P."/>
        </authorList>
    </citation>
    <scope>NUCLEOTIDE SEQUENCE [LARGE SCALE GENOMIC DNA]</scope>
    <source>
        <strain>972 / ATCC 24843</strain>
    </source>
</reference>
<evidence type="ECO:0000250" key="1"/>
<evidence type="ECO:0000256" key="2">
    <source>
        <dbReference type="SAM" id="MobiDB-lite"/>
    </source>
</evidence>
<evidence type="ECO:0000305" key="3"/>
<comment type="function">
    <text evidence="1">RNA-binding nucleolar protein required for pre-rRNA processing. Involved in production of 18S rRNA and assembly of small ribosomal subunit (By similarity).</text>
</comment>
<comment type="subcellular location">
    <subcellularLocation>
        <location evidence="1">Nucleus</location>
        <location evidence="1">Nucleolus</location>
    </subcellularLocation>
</comment>
<comment type="similarity">
    <text evidence="3">Belongs to the NOP9 family.</text>
</comment>
<dbReference type="EMBL" id="CU329670">
    <property type="protein sequence ID" value="CAB03604.1"/>
    <property type="molecule type" value="Genomic_DNA"/>
</dbReference>
<dbReference type="PIR" id="T39064">
    <property type="entry name" value="T39064"/>
</dbReference>
<dbReference type="RefSeq" id="NP_594111.1">
    <property type="nucleotide sequence ID" value="NM_001019535.2"/>
</dbReference>
<dbReference type="SMR" id="Q92347"/>
<dbReference type="BioGRID" id="278525">
    <property type="interactions" value="2"/>
</dbReference>
<dbReference type="FunCoup" id="Q92347">
    <property type="interactions" value="545"/>
</dbReference>
<dbReference type="STRING" id="284812.Q92347"/>
<dbReference type="iPTMnet" id="Q92347"/>
<dbReference type="PaxDb" id="4896-SPAC6G9.02c.1"/>
<dbReference type="EnsemblFungi" id="SPAC6G9.02c.1">
    <property type="protein sequence ID" value="SPAC6G9.02c.1:pep"/>
    <property type="gene ID" value="SPAC6G9.02c"/>
</dbReference>
<dbReference type="GeneID" id="2542044"/>
<dbReference type="KEGG" id="spo:2542044"/>
<dbReference type="PomBase" id="SPAC6G9.02c">
    <property type="gene designation" value="nop9"/>
</dbReference>
<dbReference type="VEuPathDB" id="FungiDB:SPAC6G9.02c"/>
<dbReference type="eggNOG" id="KOG2188">
    <property type="taxonomic scope" value="Eukaryota"/>
</dbReference>
<dbReference type="HOGENOM" id="CLU_008720_0_0_1"/>
<dbReference type="InParanoid" id="Q92347"/>
<dbReference type="OMA" id="HHLVRNF"/>
<dbReference type="PhylomeDB" id="Q92347"/>
<dbReference type="PRO" id="PR:Q92347"/>
<dbReference type="Proteomes" id="UP000002485">
    <property type="component" value="Chromosome I"/>
</dbReference>
<dbReference type="GO" id="GO:0030686">
    <property type="term" value="C:90S preribosome"/>
    <property type="evidence" value="ECO:0000318"/>
    <property type="project" value="GO_Central"/>
</dbReference>
<dbReference type="GO" id="GO:0005730">
    <property type="term" value="C:nucleolus"/>
    <property type="evidence" value="ECO:0007005"/>
    <property type="project" value="PomBase"/>
</dbReference>
<dbReference type="GO" id="GO:0005634">
    <property type="term" value="C:nucleus"/>
    <property type="evidence" value="ECO:0007005"/>
    <property type="project" value="PomBase"/>
</dbReference>
<dbReference type="GO" id="GO:0030688">
    <property type="term" value="C:preribosome, small subunit precursor"/>
    <property type="evidence" value="ECO:0000318"/>
    <property type="project" value="GO_Central"/>
</dbReference>
<dbReference type="GO" id="GO:0003723">
    <property type="term" value="F:RNA binding"/>
    <property type="evidence" value="ECO:0000318"/>
    <property type="project" value="GO_Central"/>
</dbReference>
<dbReference type="GO" id="GO:0000480">
    <property type="term" value="P:endonucleolytic cleavage in 5'-ETS of tricistronic rRNA transcript (SSU-rRNA, 5.8S rRNA, LSU-rRNA)"/>
    <property type="evidence" value="ECO:0000318"/>
    <property type="project" value="GO_Central"/>
</dbReference>
<dbReference type="GO" id="GO:0000447">
    <property type="term" value="P:endonucleolytic cleavage in ITS1 to separate SSU-rRNA from 5.8S rRNA and LSU-rRNA from tricistronic rRNA transcript (SSU-rRNA, 5.8S rRNA, LSU-rRNA)"/>
    <property type="evidence" value="ECO:0000318"/>
    <property type="project" value="GO_Central"/>
</dbReference>
<dbReference type="GO" id="GO:0000472">
    <property type="term" value="P:endonucleolytic cleavage to generate mature 5'-end of SSU-rRNA from (SSU-rRNA, 5.8S rRNA, LSU-rRNA)"/>
    <property type="evidence" value="ECO:0000318"/>
    <property type="project" value="GO_Central"/>
</dbReference>
<dbReference type="GO" id="GO:0000056">
    <property type="term" value="P:ribosomal small subunit export from nucleus"/>
    <property type="evidence" value="ECO:0000318"/>
    <property type="project" value="GO_Central"/>
</dbReference>
<dbReference type="Gene3D" id="1.25.10.10">
    <property type="entry name" value="Leucine-rich Repeat Variant"/>
    <property type="match status" value="3"/>
</dbReference>
<dbReference type="InterPro" id="IPR011989">
    <property type="entry name" value="ARM-like"/>
</dbReference>
<dbReference type="InterPro" id="IPR016024">
    <property type="entry name" value="ARM-type_fold"/>
</dbReference>
<dbReference type="InterPro" id="IPR040000">
    <property type="entry name" value="NOP9"/>
</dbReference>
<dbReference type="InterPro" id="IPR001313">
    <property type="entry name" value="Pumilio_RNA-bd_rpt"/>
</dbReference>
<dbReference type="PANTHER" id="PTHR13102">
    <property type="entry name" value="NUCLEOLAR PROTEIN 9"/>
    <property type="match status" value="1"/>
</dbReference>
<dbReference type="PANTHER" id="PTHR13102:SF0">
    <property type="entry name" value="NUCLEOLAR PROTEIN 9"/>
    <property type="match status" value="1"/>
</dbReference>
<dbReference type="Pfam" id="PF22493">
    <property type="entry name" value="PUF_NOP9"/>
    <property type="match status" value="1"/>
</dbReference>
<dbReference type="SMART" id="SM00025">
    <property type="entry name" value="Pumilio"/>
    <property type="match status" value="7"/>
</dbReference>
<dbReference type="SUPFAM" id="SSF48371">
    <property type="entry name" value="ARM repeat"/>
    <property type="match status" value="1"/>
</dbReference>
<proteinExistence type="inferred from homology"/>
<gene>
    <name type="primary">nop9</name>
    <name type="ORF">SPAC6G9.02c</name>
</gene>